<proteinExistence type="inferred from homology"/>
<accession>A9BZ45</accession>
<evidence type="ECO:0000255" key="1">
    <source>
        <dbReference type="HAMAP-Rule" id="MF_00041"/>
    </source>
</evidence>
<name>SYC_DELAS</name>
<dbReference type="EC" id="6.1.1.16" evidence="1"/>
<dbReference type="EMBL" id="CP000884">
    <property type="protein sequence ID" value="ABX35145.1"/>
    <property type="molecule type" value="Genomic_DNA"/>
</dbReference>
<dbReference type="RefSeq" id="WP_012204426.1">
    <property type="nucleotide sequence ID" value="NC_010002.1"/>
</dbReference>
<dbReference type="SMR" id="A9BZ45"/>
<dbReference type="STRING" id="398578.Daci_2507"/>
<dbReference type="GeneID" id="24117227"/>
<dbReference type="KEGG" id="dac:Daci_2507"/>
<dbReference type="eggNOG" id="COG0215">
    <property type="taxonomic scope" value="Bacteria"/>
</dbReference>
<dbReference type="HOGENOM" id="CLU_013528_0_1_4"/>
<dbReference type="Proteomes" id="UP000000784">
    <property type="component" value="Chromosome"/>
</dbReference>
<dbReference type="GO" id="GO:0005829">
    <property type="term" value="C:cytosol"/>
    <property type="evidence" value="ECO:0007669"/>
    <property type="project" value="TreeGrafter"/>
</dbReference>
<dbReference type="GO" id="GO:0005524">
    <property type="term" value="F:ATP binding"/>
    <property type="evidence" value="ECO:0007669"/>
    <property type="project" value="UniProtKB-UniRule"/>
</dbReference>
<dbReference type="GO" id="GO:0004817">
    <property type="term" value="F:cysteine-tRNA ligase activity"/>
    <property type="evidence" value="ECO:0007669"/>
    <property type="project" value="UniProtKB-UniRule"/>
</dbReference>
<dbReference type="GO" id="GO:0008270">
    <property type="term" value="F:zinc ion binding"/>
    <property type="evidence" value="ECO:0007669"/>
    <property type="project" value="UniProtKB-UniRule"/>
</dbReference>
<dbReference type="GO" id="GO:0006423">
    <property type="term" value="P:cysteinyl-tRNA aminoacylation"/>
    <property type="evidence" value="ECO:0007669"/>
    <property type="project" value="UniProtKB-UniRule"/>
</dbReference>
<dbReference type="CDD" id="cd07963">
    <property type="entry name" value="Anticodon_Ia_Cys"/>
    <property type="match status" value="1"/>
</dbReference>
<dbReference type="CDD" id="cd00672">
    <property type="entry name" value="CysRS_core"/>
    <property type="match status" value="1"/>
</dbReference>
<dbReference type="FunFam" id="3.40.50.620:FF:000009">
    <property type="entry name" value="Cysteine--tRNA ligase"/>
    <property type="match status" value="1"/>
</dbReference>
<dbReference type="Gene3D" id="1.20.120.1910">
    <property type="entry name" value="Cysteine-tRNA ligase, C-terminal anti-codon recognition domain"/>
    <property type="match status" value="1"/>
</dbReference>
<dbReference type="Gene3D" id="3.40.50.620">
    <property type="entry name" value="HUPs"/>
    <property type="match status" value="1"/>
</dbReference>
<dbReference type="HAMAP" id="MF_00041">
    <property type="entry name" value="Cys_tRNA_synth"/>
    <property type="match status" value="1"/>
</dbReference>
<dbReference type="InterPro" id="IPR015803">
    <property type="entry name" value="Cys-tRNA-ligase"/>
</dbReference>
<dbReference type="InterPro" id="IPR015273">
    <property type="entry name" value="Cys-tRNA-synt_Ia_DALR"/>
</dbReference>
<dbReference type="InterPro" id="IPR024909">
    <property type="entry name" value="Cys-tRNA/MSH_ligase"/>
</dbReference>
<dbReference type="InterPro" id="IPR056411">
    <property type="entry name" value="CysS_C"/>
</dbReference>
<dbReference type="InterPro" id="IPR014729">
    <property type="entry name" value="Rossmann-like_a/b/a_fold"/>
</dbReference>
<dbReference type="InterPro" id="IPR032678">
    <property type="entry name" value="tRNA-synt_1_cat_dom"/>
</dbReference>
<dbReference type="InterPro" id="IPR009080">
    <property type="entry name" value="tRNAsynth_Ia_anticodon-bd"/>
</dbReference>
<dbReference type="NCBIfam" id="TIGR00435">
    <property type="entry name" value="cysS"/>
    <property type="match status" value="1"/>
</dbReference>
<dbReference type="PANTHER" id="PTHR10890:SF3">
    <property type="entry name" value="CYSTEINE--TRNA LIGASE, CYTOPLASMIC"/>
    <property type="match status" value="1"/>
</dbReference>
<dbReference type="PANTHER" id="PTHR10890">
    <property type="entry name" value="CYSTEINYL-TRNA SYNTHETASE"/>
    <property type="match status" value="1"/>
</dbReference>
<dbReference type="Pfam" id="PF23493">
    <property type="entry name" value="CysS_C"/>
    <property type="match status" value="1"/>
</dbReference>
<dbReference type="Pfam" id="PF09190">
    <property type="entry name" value="DALR_2"/>
    <property type="match status" value="1"/>
</dbReference>
<dbReference type="Pfam" id="PF01406">
    <property type="entry name" value="tRNA-synt_1e"/>
    <property type="match status" value="1"/>
</dbReference>
<dbReference type="PRINTS" id="PR00983">
    <property type="entry name" value="TRNASYNTHCYS"/>
</dbReference>
<dbReference type="SMART" id="SM00840">
    <property type="entry name" value="DALR_2"/>
    <property type="match status" value="1"/>
</dbReference>
<dbReference type="SUPFAM" id="SSF47323">
    <property type="entry name" value="Anticodon-binding domain of a subclass of class I aminoacyl-tRNA synthetases"/>
    <property type="match status" value="1"/>
</dbReference>
<dbReference type="SUPFAM" id="SSF52374">
    <property type="entry name" value="Nucleotidylyl transferase"/>
    <property type="match status" value="1"/>
</dbReference>
<feature type="chain" id="PRO_1000090830" description="Cysteine--tRNA ligase">
    <location>
        <begin position="1"/>
        <end position="461"/>
    </location>
</feature>
<feature type="short sequence motif" description="'HIGH' region">
    <location>
        <begin position="31"/>
        <end position="41"/>
    </location>
</feature>
<feature type="short sequence motif" description="'KMSKS' region">
    <location>
        <begin position="270"/>
        <end position="274"/>
    </location>
</feature>
<feature type="binding site" evidence="1">
    <location>
        <position position="29"/>
    </location>
    <ligand>
        <name>Zn(2+)</name>
        <dbReference type="ChEBI" id="CHEBI:29105"/>
    </ligand>
</feature>
<feature type="binding site" evidence="1">
    <location>
        <position position="213"/>
    </location>
    <ligand>
        <name>Zn(2+)</name>
        <dbReference type="ChEBI" id="CHEBI:29105"/>
    </ligand>
</feature>
<feature type="binding site" evidence="1">
    <location>
        <position position="238"/>
    </location>
    <ligand>
        <name>Zn(2+)</name>
        <dbReference type="ChEBI" id="CHEBI:29105"/>
    </ligand>
</feature>
<feature type="binding site" evidence="1">
    <location>
        <position position="242"/>
    </location>
    <ligand>
        <name>Zn(2+)</name>
        <dbReference type="ChEBI" id="CHEBI:29105"/>
    </ligand>
</feature>
<feature type="binding site" evidence="1">
    <location>
        <position position="273"/>
    </location>
    <ligand>
        <name>ATP</name>
        <dbReference type="ChEBI" id="CHEBI:30616"/>
    </ligand>
</feature>
<reference key="1">
    <citation type="submission" date="2007-11" db="EMBL/GenBank/DDBJ databases">
        <title>Complete sequence of Delftia acidovorans DSM 14801 / SPH-1.</title>
        <authorList>
            <person name="Copeland A."/>
            <person name="Lucas S."/>
            <person name="Lapidus A."/>
            <person name="Barry K."/>
            <person name="Glavina del Rio T."/>
            <person name="Dalin E."/>
            <person name="Tice H."/>
            <person name="Pitluck S."/>
            <person name="Lowry S."/>
            <person name="Clum A."/>
            <person name="Schmutz J."/>
            <person name="Larimer F."/>
            <person name="Land M."/>
            <person name="Hauser L."/>
            <person name="Kyrpides N."/>
            <person name="Kim E."/>
            <person name="Schleheck D."/>
            <person name="Richardson P."/>
        </authorList>
    </citation>
    <scope>NUCLEOTIDE SEQUENCE [LARGE SCALE GENOMIC DNA]</scope>
    <source>
        <strain>DSM 14801 / SPH-1</strain>
    </source>
</reference>
<comment type="catalytic activity">
    <reaction evidence="1">
        <text>tRNA(Cys) + L-cysteine + ATP = L-cysteinyl-tRNA(Cys) + AMP + diphosphate</text>
        <dbReference type="Rhea" id="RHEA:17773"/>
        <dbReference type="Rhea" id="RHEA-COMP:9661"/>
        <dbReference type="Rhea" id="RHEA-COMP:9679"/>
        <dbReference type="ChEBI" id="CHEBI:30616"/>
        <dbReference type="ChEBI" id="CHEBI:33019"/>
        <dbReference type="ChEBI" id="CHEBI:35235"/>
        <dbReference type="ChEBI" id="CHEBI:78442"/>
        <dbReference type="ChEBI" id="CHEBI:78517"/>
        <dbReference type="ChEBI" id="CHEBI:456215"/>
        <dbReference type="EC" id="6.1.1.16"/>
    </reaction>
</comment>
<comment type="cofactor">
    <cofactor evidence="1">
        <name>Zn(2+)</name>
        <dbReference type="ChEBI" id="CHEBI:29105"/>
    </cofactor>
    <text evidence="1">Binds 1 zinc ion per subunit.</text>
</comment>
<comment type="subunit">
    <text evidence="1">Monomer.</text>
</comment>
<comment type="subcellular location">
    <subcellularLocation>
        <location evidence="1">Cytoplasm</location>
    </subcellularLocation>
</comment>
<comment type="similarity">
    <text evidence="1">Belongs to the class-I aminoacyl-tRNA synthetase family.</text>
</comment>
<keyword id="KW-0030">Aminoacyl-tRNA synthetase</keyword>
<keyword id="KW-0067">ATP-binding</keyword>
<keyword id="KW-0963">Cytoplasm</keyword>
<keyword id="KW-0436">Ligase</keyword>
<keyword id="KW-0479">Metal-binding</keyword>
<keyword id="KW-0547">Nucleotide-binding</keyword>
<keyword id="KW-0648">Protein biosynthesis</keyword>
<keyword id="KW-1185">Reference proteome</keyword>
<keyword id="KW-0862">Zinc</keyword>
<gene>
    <name evidence="1" type="primary">cysS</name>
    <name type="ordered locus">Daci_2507</name>
</gene>
<protein>
    <recommendedName>
        <fullName evidence="1">Cysteine--tRNA ligase</fullName>
        <ecNumber evidence="1">6.1.1.16</ecNumber>
    </recommendedName>
    <alternativeName>
        <fullName evidence="1">Cysteinyl-tRNA synthetase</fullName>
        <shortName evidence="1">CysRS</shortName>
    </alternativeName>
</protein>
<sequence length="461" mass="50625">MSLRIYNTLSRALEAFSPIEPGHVRMYVCGMTVYDLCHLGHARSMVAFDVVQRWLRASGHRVTYVRNITDIDDKIIRRAVENGETIRSLTDRMIDALHQDADALGIERPTHEPRATEYVPQMLSMIGRLQDKGLAYQGTDGDVNFAVRKFPGYGKLSGKSLDELQAGERVAVQDGKQDPLDFVLWKSAKPAEPEEVKWASPWGVGRPGWHIECSAMGCEMLGESFDIHGGGADLQFPHHENEIAQSEGATGKPFSQVWMHNGFINVDNEKMSKSLGNFFTIRDVLKEYDAETVRFFVVRSHYRSPLNYSDVHLNDARGALKRLYTALSLVAPAEVAVDWNHPAAARFKAAMDEDFGTPEAVAVLFELAAEVNRSKSAETAGLLKALAGCLGLLQGDPQAFLQAGTSEMDAGAIEAQIAARAAAKAAKDWAEADRIRKALLEQGIVLKDSPAGTTWEAAAKG</sequence>
<organism>
    <name type="scientific">Delftia acidovorans (strain DSM 14801 / SPH-1)</name>
    <dbReference type="NCBI Taxonomy" id="398578"/>
    <lineage>
        <taxon>Bacteria</taxon>
        <taxon>Pseudomonadati</taxon>
        <taxon>Pseudomonadota</taxon>
        <taxon>Betaproteobacteria</taxon>
        <taxon>Burkholderiales</taxon>
        <taxon>Comamonadaceae</taxon>
        <taxon>Delftia</taxon>
    </lineage>
</organism>